<gene>
    <name type="primary">MKX</name>
</gene>
<name>MKX_PONAB</name>
<protein>
    <recommendedName>
        <fullName>Homeobox protein Mohawk</fullName>
    </recommendedName>
</protein>
<dbReference type="EMBL" id="CR860444">
    <property type="protein sequence ID" value="CAH92568.1"/>
    <property type="molecule type" value="mRNA"/>
</dbReference>
<dbReference type="RefSeq" id="NP_001126505.1">
    <property type="nucleotide sequence ID" value="NM_001133033.1"/>
</dbReference>
<dbReference type="SMR" id="Q5R6P2"/>
<dbReference type="FunCoup" id="Q5R6P2">
    <property type="interactions" value="957"/>
</dbReference>
<dbReference type="STRING" id="9601.ENSPPYP00000002530"/>
<dbReference type="GeneID" id="100173493"/>
<dbReference type="KEGG" id="pon:100173493"/>
<dbReference type="CTD" id="283078"/>
<dbReference type="eggNOG" id="KOG0773">
    <property type="taxonomic scope" value="Eukaryota"/>
</dbReference>
<dbReference type="InParanoid" id="Q5R6P2"/>
<dbReference type="OrthoDB" id="21495at2759"/>
<dbReference type="Proteomes" id="UP000001595">
    <property type="component" value="Unplaced"/>
</dbReference>
<dbReference type="GO" id="GO:0005634">
    <property type="term" value="C:nucleus"/>
    <property type="evidence" value="ECO:0007669"/>
    <property type="project" value="UniProtKB-SubCell"/>
</dbReference>
<dbReference type="GO" id="GO:0000981">
    <property type="term" value="F:DNA-binding transcription factor activity, RNA polymerase II-specific"/>
    <property type="evidence" value="ECO:0007669"/>
    <property type="project" value="TreeGrafter"/>
</dbReference>
<dbReference type="GO" id="GO:0000978">
    <property type="term" value="F:RNA polymerase II cis-regulatory region sequence-specific DNA binding"/>
    <property type="evidence" value="ECO:0007669"/>
    <property type="project" value="TreeGrafter"/>
</dbReference>
<dbReference type="GO" id="GO:0048468">
    <property type="term" value="P:cell development"/>
    <property type="evidence" value="ECO:0007669"/>
    <property type="project" value="TreeGrafter"/>
</dbReference>
<dbReference type="GO" id="GO:0007517">
    <property type="term" value="P:muscle organ development"/>
    <property type="evidence" value="ECO:0007669"/>
    <property type="project" value="TreeGrafter"/>
</dbReference>
<dbReference type="CDD" id="cd00086">
    <property type="entry name" value="homeodomain"/>
    <property type="match status" value="1"/>
</dbReference>
<dbReference type="Gene3D" id="1.10.10.60">
    <property type="entry name" value="Homeodomain-like"/>
    <property type="match status" value="1"/>
</dbReference>
<dbReference type="InterPro" id="IPR001356">
    <property type="entry name" value="HD"/>
</dbReference>
<dbReference type="InterPro" id="IPR009057">
    <property type="entry name" value="Homeodomain-like_sf"/>
</dbReference>
<dbReference type="InterPro" id="IPR008422">
    <property type="entry name" value="KN_HD"/>
</dbReference>
<dbReference type="PANTHER" id="PTHR11211:SF3">
    <property type="entry name" value="HOMEOBOX PROTEIN MOHAWK"/>
    <property type="match status" value="1"/>
</dbReference>
<dbReference type="PANTHER" id="PTHR11211">
    <property type="entry name" value="IROQUOIS-CLASS HOMEODOMAIN PROTEIN IRX"/>
    <property type="match status" value="1"/>
</dbReference>
<dbReference type="Pfam" id="PF05920">
    <property type="entry name" value="Homeobox_KN"/>
    <property type="match status" value="1"/>
</dbReference>
<dbReference type="SMART" id="SM00389">
    <property type="entry name" value="HOX"/>
    <property type="match status" value="1"/>
</dbReference>
<dbReference type="SUPFAM" id="SSF46689">
    <property type="entry name" value="Homeodomain-like"/>
    <property type="match status" value="1"/>
</dbReference>
<dbReference type="PROSITE" id="PS50071">
    <property type="entry name" value="HOMEOBOX_2"/>
    <property type="match status" value="1"/>
</dbReference>
<organism>
    <name type="scientific">Pongo abelii</name>
    <name type="common">Sumatran orangutan</name>
    <name type="synonym">Pongo pygmaeus abelii</name>
    <dbReference type="NCBI Taxonomy" id="9601"/>
    <lineage>
        <taxon>Eukaryota</taxon>
        <taxon>Metazoa</taxon>
        <taxon>Chordata</taxon>
        <taxon>Craniata</taxon>
        <taxon>Vertebrata</taxon>
        <taxon>Euteleostomi</taxon>
        <taxon>Mammalia</taxon>
        <taxon>Eutheria</taxon>
        <taxon>Euarchontoglires</taxon>
        <taxon>Primates</taxon>
        <taxon>Haplorrhini</taxon>
        <taxon>Catarrhini</taxon>
        <taxon>Hominidae</taxon>
        <taxon>Pongo</taxon>
    </lineage>
</organism>
<sequence>MNTIVFNKLSGAVLFEDGGASERERGGRPYSGVLDSPHARPEVGIADGPPLKDNLGLRHRRTGARQNGGKVRHKRQALQDMARPLKQWLYKHRDNPYPTKTEKILLALGPQMTLVQVSNWFANARRRLKNTVRQPDLSWALRIKLYNKYVQGNAERLSVSSDDSCSEGGENPPRTHMNEGGYNTPVHHPVIKSENSVIKAGVRPESRASEDYVAPPKYKSSLLNRYLNDSLRHVMATNTTMMGKTRQRNHSGSFSSNEFEEELVSPSSSETEGNFVYRTDTLENGFNKGDSAANRKGPSKDDTYWKEINAAMALTNLAQGKDKLQGTTSCIIQKSSHIAEVKTVKVPLVQHF</sequence>
<evidence type="ECO:0000250" key="1"/>
<evidence type="ECO:0000255" key="2">
    <source>
        <dbReference type="PROSITE-ProRule" id="PRU00108"/>
    </source>
</evidence>
<evidence type="ECO:0000256" key="3">
    <source>
        <dbReference type="SAM" id="MobiDB-lite"/>
    </source>
</evidence>
<evidence type="ECO:0000305" key="4"/>
<feature type="chain" id="PRO_0000268858" description="Homeobox protein Mohawk">
    <location>
        <begin position="1"/>
        <end position="352"/>
    </location>
</feature>
<feature type="DNA-binding region" description="Homeobox; TALE-type" evidence="2">
    <location>
        <begin position="71"/>
        <end position="132"/>
    </location>
</feature>
<feature type="region of interest" description="Disordered" evidence="3">
    <location>
        <begin position="19"/>
        <end position="53"/>
    </location>
</feature>
<feature type="region of interest" description="Disordered" evidence="3">
    <location>
        <begin position="157"/>
        <end position="194"/>
    </location>
</feature>
<feature type="region of interest" description="Disordered" evidence="3">
    <location>
        <begin position="245"/>
        <end position="272"/>
    </location>
</feature>
<comment type="function">
    <text evidence="1">May act as a morphogenetic regulator of cell adhesion.</text>
</comment>
<comment type="subcellular location">
    <subcellularLocation>
        <location evidence="4">Nucleus</location>
    </subcellularLocation>
</comment>
<comment type="similarity">
    <text evidence="4">Belongs to the TALE/IRO homeobox family.</text>
</comment>
<accession>Q5R6P2</accession>
<reference key="1">
    <citation type="submission" date="2004-11" db="EMBL/GenBank/DDBJ databases">
        <authorList>
            <consortium name="The German cDNA consortium"/>
        </authorList>
    </citation>
    <scope>NUCLEOTIDE SEQUENCE [LARGE SCALE MRNA]</scope>
    <source>
        <tissue>Brain cortex</tissue>
    </source>
</reference>
<keyword id="KW-0217">Developmental protein</keyword>
<keyword id="KW-0238">DNA-binding</keyword>
<keyword id="KW-0371">Homeobox</keyword>
<keyword id="KW-0539">Nucleus</keyword>
<keyword id="KW-1185">Reference proteome</keyword>
<proteinExistence type="evidence at transcript level"/>